<proteinExistence type="inferred from homology"/>
<comment type="function">
    <text>Involved in a binding protein-dependent transport system responsible for the uptake of melibiose, raffinose and isomaltotriose. Probably responsible for energy coupling to the transport system.</text>
</comment>
<comment type="subcellular location">
    <subcellularLocation>
        <location evidence="2">Cell membrane</location>
        <topology evidence="2">Peripheral membrane protein</topology>
    </subcellularLocation>
</comment>
<comment type="similarity">
    <text evidence="2">Belongs to the ABC transporter superfamily.</text>
</comment>
<gene>
    <name type="primary">msmK</name>
    <name type="ordered locus">SMU_882</name>
</gene>
<keyword id="KW-0067">ATP-binding</keyword>
<keyword id="KW-1003">Cell membrane</keyword>
<keyword id="KW-0472">Membrane</keyword>
<keyword id="KW-0547">Nucleotide-binding</keyword>
<keyword id="KW-1185">Reference proteome</keyword>
<keyword id="KW-0762">Sugar transport</keyword>
<keyword id="KW-0813">Transport</keyword>
<sequence>MVELNLNHIYKKYPNSSHYSVEDFDLDIKNKEFIVFVGPSGCGKSTTLRMVAGLEDITKGELKIDGEVVNDKAPKDRDIAMVFQNYALYPHMSVYDNMAFGLKLRHYSKEAIDKRVKEAAQILGLTEFLERKPADLSGGQRQRVAMGRAIVRDAKVFLMDEPLSNLDAKLRVSMRAEIAKIHRRIGATTIYVTHDQTEAMTLADRIVIMSSTKNEDGSGTIGRVEQVGTPQELYNRPANKFVAGFIGSPAMNFFDVTIKDGHLVSKDGLTIAVTEGQLKMLESKGFKNKNLIFGIRPEDISSSLLVQETYPDATVDAEVVVSELLGSETMLYLKLGQTEFAARVDARDFHEPGEKVSLTFNVAKGHFFDAETEAAIR</sequence>
<accession>Q00752</accession>
<reference key="1">
    <citation type="journal article" date="1992" name="J. Biol. Chem.">
        <title>A binding protein-dependent transport system in Streptococcus mutans responsible for multiple sugar metabolism.</title>
        <authorList>
            <person name="Russell R.R.B."/>
            <person name="Aduse-Opoku J."/>
            <person name="Sutcliffe I.C."/>
            <person name="Tao L."/>
            <person name="Ferretti J.J."/>
        </authorList>
    </citation>
    <scope>NUCLEOTIDE SEQUENCE [GENOMIC DNA]</scope>
    <source>
        <strain>Ingbritt</strain>
    </source>
</reference>
<reference key="2">
    <citation type="journal article" date="2002" name="Proc. Natl. Acad. Sci. U.S.A.">
        <title>Genome sequence of Streptococcus mutans UA159, a cariogenic dental pathogen.</title>
        <authorList>
            <person name="Ajdic D.J."/>
            <person name="McShan W.M."/>
            <person name="McLaughlin R.E."/>
            <person name="Savic G."/>
            <person name="Chang J."/>
            <person name="Carson M.B."/>
            <person name="Primeaux C."/>
            <person name="Tian R."/>
            <person name="Kenton S."/>
            <person name="Jia H.G."/>
            <person name="Lin S.P."/>
            <person name="Qian Y."/>
            <person name="Li S."/>
            <person name="Zhu H."/>
            <person name="Najar F.Z."/>
            <person name="Lai H."/>
            <person name="White J."/>
            <person name="Roe B.A."/>
            <person name="Ferretti J.J."/>
        </authorList>
    </citation>
    <scope>NUCLEOTIDE SEQUENCE [LARGE SCALE GENOMIC DNA]</scope>
    <source>
        <strain>ATCC 700610 / UA159</strain>
    </source>
</reference>
<organism>
    <name type="scientific">Streptococcus mutans serotype c (strain ATCC 700610 / UA159)</name>
    <dbReference type="NCBI Taxonomy" id="210007"/>
    <lineage>
        <taxon>Bacteria</taxon>
        <taxon>Bacillati</taxon>
        <taxon>Bacillota</taxon>
        <taxon>Bacilli</taxon>
        <taxon>Lactobacillales</taxon>
        <taxon>Streptococcaceae</taxon>
        <taxon>Streptococcus</taxon>
    </lineage>
</organism>
<name>MSMK_STRMU</name>
<dbReference type="EMBL" id="M77351">
    <property type="protein sequence ID" value="AAA26938.1"/>
    <property type="molecule type" value="Genomic_DNA"/>
</dbReference>
<dbReference type="EMBL" id="AE014133">
    <property type="protein sequence ID" value="AAN58597.1"/>
    <property type="molecule type" value="Genomic_DNA"/>
</dbReference>
<dbReference type="PIR" id="E42400">
    <property type="entry name" value="E42400"/>
</dbReference>
<dbReference type="RefSeq" id="NP_721291.1">
    <property type="nucleotide sequence ID" value="NC_004350.2"/>
</dbReference>
<dbReference type="RefSeq" id="WP_002262876.1">
    <property type="nucleotide sequence ID" value="NC_004350.2"/>
</dbReference>
<dbReference type="SMR" id="Q00752"/>
<dbReference type="STRING" id="210007.SMU_882"/>
<dbReference type="TCDB" id="3.A.1.1.28">
    <property type="family name" value="the atp-binding cassette (abc) superfamily"/>
</dbReference>
<dbReference type="KEGG" id="smu:SMU_882"/>
<dbReference type="PATRIC" id="fig|210007.7.peg.788"/>
<dbReference type="eggNOG" id="COG3842">
    <property type="taxonomic scope" value="Bacteria"/>
</dbReference>
<dbReference type="HOGENOM" id="CLU_000604_1_1_9"/>
<dbReference type="OrthoDB" id="9790614at2"/>
<dbReference type="PhylomeDB" id="Q00752"/>
<dbReference type="Proteomes" id="UP000002512">
    <property type="component" value="Chromosome"/>
</dbReference>
<dbReference type="GO" id="GO:0055052">
    <property type="term" value="C:ATP-binding cassette (ABC) transporter complex, substrate-binding subunit-containing"/>
    <property type="evidence" value="ECO:0007669"/>
    <property type="project" value="TreeGrafter"/>
</dbReference>
<dbReference type="GO" id="GO:0140359">
    <property type="term" value="F:ABC-type transporter activity"/>
    <property type="evidence" value="ECO:0007669"/>
    <property type="project" value="InterPro"/>
</dbReference>
<dbReference type="GO" id="GO:0005524">
    <property type="term" value="F:ATP binding"/>
    <property type="evidence" value="ECO:0007669"/>
    <property type="project" value="UniProtKB-KW"/>
</dbReference>
<dbReference type="GO" id="GO:0016887">
    <property type="term" value="F:ATP hydrolysis activity"/>
    <property type="evidence" value="ECO:0007669"/>
    <property type="project" value="InterPro"/>
</dbReference>
<dbReference type="GO" id="GO:0008643">
    <property type="term" value="P:carbohydrate transport"/>
    <property type="evidence" value="ECO:0007669"/>
    <property type="project" value="InterPro"/>
</dbReference>
<dbReference type="CDD" id="cd03301">
    <property type="entry name" value="ABC_MalK_N"/>
    <property type="match status" value="1"/>
</dbReference>
<dbReference type="FunFam" id="3.40.50.300:FF:000042">
    <property type="entry name" value="Maltose/maltodextrin ABC transporter, ATP-binding protein"/>
    <property type="match status" value="1"/>
</dbReference>
<dbReference type="Gene3D" id="2.40.50.100">
    <property type="match status" value="1"/>
</dbReference>
<dbReference type="Gene3D" id="2.40.50.140">
    <property type="entry name" value="Nucleic acid-binding proteins"/>
    <property type="match status" value="1"/>
</dbReference>
<dbReference type="Gene3D" id="3.40.50.300">
    <property type="entry name" value="P-loop containing nucleotide triphosphate hydrolases"/>
    <property type="match status" value="1"/>
</dbReference>
<dbReference type="InterPro" id="IPR003593">
    <property type="entry name" value="AAA+_ATPase"/>
</dbReference>
<dbReference type="InterPro" id="IPR003439">
    <property type="entry name" value="ABC_transporter-like_ATP-bd"/>
</dbReference>
<dbReference type="InterPro" id="IPR017871">
    <property type="entry name" value="ABC_transporter-like_CS"/>
</dbReference>
<dbReference type="InterPro" id="IPR015855">
    <property type="entry name" value="ABC_transpr_MalK-like"/>
</dbReference>
<dbReference type="InterPro" id="IPR047641">
    <property type="entry name" value="ABC_transpr_MalK/UgpC-like"/>
</dbReference>
<dbReference type="InterPro" id="IPR008995">
    <property type="entry name" value="Mo/tungstate-bd_C_term_dom"/>
</dbReference>
<dbReference type="InterPro" id="IPR012340">
    <property type="entry name" value="NA-bd_OB-fold"/>
</dbReference>
<dbReference type="InterPro" id="IPR040582">
    <property type="entry name" value="OB_MalK-like"/>
</dbReference>
<dbReference type="InterPro" id="IPR027417">
    <property type="entry name" value="P-loop_NTPase"/>
</dbReference>
<dbReference type="InterPro" id="IPR005116">
    <property type="entry name" value="Transp-assoc_OB_typ1"/>
</dbReference>
<dbReference type="NCBIfam" id="NF008653">
    <property type="entry name" value="PRK11650.1"/>
    <property type="match status" value="1"/>
</dbReference>
<dbReference type="PANTHER" id="PTHR43875">
    <property type="entry name" value="MALTODEXTRIN IMPORT ATP-BINDING PROTEIN MSMX"/>
    <property type="match status" value="1"/>
</dbReference>
<dbReference type="PANTHER" id="PTHR43875:SF1">
    <property type="entry name" value="OSMOPROTECTIVE COMPOUNDS UPTAKE ATP-BINDING PROTEIN GGTA"/>
    <property type="match status" value="1"/>
</dbReference>
<dbReference type="Pfam" id="PF00005">
    <property type="entry name" value="ABC_tran"/>
    <property type="match status" value="1"/>
</dbReference>
<dbReference type="Pfam" id="PF17912">
    <property type="entry name" value="OB_MalK"/>
    <property type="match status" value="1"/>
</dbReference>
<dbReference type="Pfam" id="PF03459">
    <property type="entry name" value="TOBE"/>
    <property type="match status" value="1"/>
</dbReference>
<dbReference type="SMART" id="SM00382">
    <property type="entry name" value="AAA"/>
    <property type="match status" value="1"/>
</dbReference>
<dbReference type="SUPFAM" id="SSF50331">
    <property type="entry name" value="MOP-like"/>
    <property type="match status" value="1"/>
</dbReference>
<dbReference type="SUPFAM" id="SSF52540">
    <property type="entry name" value="P-loop containing nucleoside triphosphate hydrolases"/>
    <property type="match status" value="1"/>
</dbReference>
<dbReference type="PROSITE" id="PS00211">
    <property type="entry name" value="ABC_TRANSPORTER_1"/>
    <property type="match status" value="1"/>
</dbReference>
<dbReference type="PROSITE" id="PS50893">
    <property type="entry name" value="ABC_TRANSPORTER_2"/>
    <property type="match status" value="1"/>
</dbReference>
<evidence type="ECO:0000255" key="1">
    <source>
        <dbReference type="PROSITE-ProRule" id="PRU00434"/>
    </source>
</evidence>
<evidence type="ECO:0000305" key="2"/>
<protein>
    <recommendedName>
        <fullName>Multiple sugar-binding transport ATP-binding protein MsmK</fullName>
    </recommendedName>
</protein>
<feature type="chain" id="PRO_0000092612" description="Multiple sugar-binding transport ATP-binding protein MsmK">
    <location>
        <begin position="1"/>
        <end position="377"/>
    </location>
</feature>
<feature type="domain" description="ABC transporter" evidence="1">
    <location>
        <begin position="4"/>
        <end position="246"/>
    </location>
</feature>
<feature type="binding site" evidence="1">
    <location>
        <begin position="38"/>
        <end position="45"/>
    </location>
    <ligand>
        <name>ATP</name>
        <dbReference type="ChEBI" id="CHEBI:30616"/>
    </ligand>
</feature>